<feature type="signal peptide" evidence="1">
    <location>
        <begin position="1"/>
        <end position="22"/>
    </location>
</feature>
<feature type="peptide" id="PRO_0000453399" description="Z-limacoditoxin(1)-Dv4" evidence="1">
    <location>
        <begin position="23"/>
        <end position="32"/>
    </location>
</feature>
<feature type="modified residue" description="Pyrrolidone carboxylic acid" evidence="1">
    <location>
        <position position="23"/>
    </location>
</feature>
<feature type="modified residue" description="Proline amide" evidence="1">
    <location>
        <position position="32"/>
    </location>
</feature>
<dbReference type="GO" id="GO:0005576">
    <property type="term" value="C:extracellular region"/>
    <property type="evidence" value="ECO:0007669"/>
    <property type="project" value="UniProtKB-SubCell"/>
</dbReference>
<dbReference type="GO" id="GO:0090729">
    <property type="term" value="F:toxin activity"/>
    <property type="evidence" value="ECO:0007669"/>
    <property type="project" value="UniProtKB-KW"/>
</dbReference>
<accession>P0DUS3</accession>
<protein>
    <recommendedName>
        <fullName evidence="2">Z-limacoditoxin(1)-Dv4</fullName>
        <shortName evidence="2">Z-LCTX(1)-Dv4</shortName>
    </recommendedName>
    <alternativeName>
        <fullName evidence="2">Vulnericin</fullName>
    </alternativeName>
</protein>
<organism>
    <name type="scientific">Doratifera vulnerans</name>
    <name type="common">Mottled cup moth</name>
    <dbReference type="NCBI Taxonomy" id="1372962"/>
    <lineage>
        <taxon>Eukaryota</taxon>
        <taxon>Metazoa</taxon>
        <taxon>Ecdysozoa</taxon>
        <taxon>Arthropoda</taxon>
        <taxon>Hexapoda</taxon>
        <taxon>Insecta</taxon>
        <taxon>Pterygota</taxon>
        <taxon>Neoptera</taxon>
        <taxon>Endopterygota</taxon>
        <taxon>Lepidoptera</taxon>
        <taxon>Glossata</taxon>
        <taxon>Ditrysia</taxon>
        <taxon>Zygaenoidea</taxon>
        <taxon>Limacodidae</taxon>
        <taxon>Doratifera</taxon>
    </lineage>
</organism>
<evidence type="ECO:0000269" key="1">
    <source>
    </source>
</evidence>
<evidence type="ECO:0000303" key="2">
    <source>
    </source>
</evidence>
<evidence type="ECO:0000305" key="3"/>
<evidence type="ECO:0000305" key="4">
    <source>
    </source>
</evidence>
<name>Z14_DORVU</name>
<reference key="1">
    <citation type="journal article" date="2021" name="Proc. Natl. Acad. Sci. U.S.A.">
        <title>Production, composition, and mode of action of the painful defensive venom produced by a limacodid caterpillar, Doratifera vulnerans.</title>
        <authorList>
            <person name="Walker A.A."/>
            <person name="Robinson S.D."/>
            <person name="Paluzzi J.V."/>
            <person name="Merritt D.J."/>
            <person name="Nixon S.A."/>
            <person name="Schroeder C.I."/>
            <person name="Jin J."/>
            <person name="Goudarzi M.H."/>
            <person name="Kotze A.C."/>
            <person name="Dekan Z."/>
            <person name="Sombke A."/>
            <person name="Alewood P.F."/>
            <person name="Fry B.G."/>
            <person name="Epstein M.E."/>
            <person name="Vetter I."/>
            <person name="King G.F."/>
        </authorList>
    </citation>
    <scope>NUCLEOTIDE SEQUENCE [MRNA]</scope>
    <scope>PROTEIN SEQUENCE OF 23-32</scope>
    <scope>FUNCTION</scope>
    <scope>SUBCELLULAR LOCATION</scope>
    <scope>PYROGLUTAMATE FORMATION AT GLN-23</scope>
    <scope>AMIDATION AT PRO-32</scope>
    <scope>SYNTHESIS OF 23-32</scope>
    <scope>IDENTIFICATION BY MASS SPECTROMETRY</scope>
    <source>
        <tissue>Venom</tissue>
    </source>
</reference>
<proteinExistence type="evidence at protein level"/>
<keyword id="KW-0027">Amidation</keyword>
<keyword id="KW-0903">Direct protein sequencing</keyword>
<keyword id="KW-1213">G-protein coupled receptor impairing toxin</keyword>
<keyword id="KW-0873">Pyrrolidone carboxylic acid</keyword>
<keyword id="KW-0964">Secreted</keyword>
<keyword id="KW-0732">Signal</keyword>
<keyword id="KW-0800">Toxin</keyword>
<sequence>MKKTFLPIFLVILLASYALGNPQITFSKDWRPGKK</sequence>
<comment type="function">
    <text evidence="1">Potently activates insect GPCR. More precisely, it activates the ACP receptor (ACPR) from the mosquito A.aegypti (EC(50)=3.07 nM) with a potency comparable to that of the endogenous ligand. Has no activity on receptors of the closely related neuropeptides adipokinetic hormone and corazonin. In vivo, does not reveal any observable effects when injected into crickets (A.domesticus). Does not induce increase in intracellular calcium in mouse DRG neurons, suggesting that it does not induce pain.</text>
</comment>
<comment type="subcellular location">
    <subcellularLocation>
        <location evidence="1">Secreted</location>
    </subcellularLocation>
</comment>
<comment type="tissue specificity">
    <text evidence="4">Expressed by the venom secretory cell of the spine. The spine is a cuticular structure containing a single large nucleated venom-secreting cell at its base. It is an independent unit capable of producing, storing and injecting venom. On the back of D.vulnerans caterpillars, spines are grouped together by 50 to 100 to form scoli, of which there are eight in D.vulnerans.</text>
</comment>
<comment type="developmental stage">
    <text evidence="1">Only secreted by larvae. Adult moth do not have spines.</text>
</comment>
<comment type="miscellaneous">
    <text evidence="4">Extremely abundant peptide in the venom (almost one-quarter of all toxin-encoding transcripts, and the highest represented peptide by proteomics methods).</text>
</comment>
<comment type="similarity">
    <text evidence="3">Belongs to the limacoditoxin-1 (ACP-like) family.</text>
</comment>